<name>FABV_OPITP</name>
<accession>B1ZZ93</accession>
<proteinExistence type="inferred from homology"/>
<comment type="function">
    <text evidence="1">Involved in the final reduction of the elongation cycle of fatty acid synthesis (FAS II). Catalyzes the reduction of a carbon-carbon double bond in an enoyl moiety that is covalently linked to an acyl carrier protein (ACP).</text>
</comment>
<comment type="catalytic activity">
    <reaction evidence="1">
        <text>a 2,3-saturated acyl-[ACP] + NAD(+) = a (2E)-enoyl-[ACP] + NADH + H(+)</text>
        <dbReference type="Rhea" id="RHEA:10240"/>
        <dbReference type="Rhea" id="RHEA-COMP:9925"/>
        <dbReference type="Rhea" id="RHEA-COMP:9926"/>
        <dbReference type="ChEBI" id="CHEBI:15378"/>
        <dbReference type="ChEBI" id="CHEBI:57540"/>
        <dbReference type="ChEBI" id="CHEBI:57945"/>
        <dbReference type="ChEBI" id="CHEBI:78784"/>
        <dbReference type="ChEBI" id="CHEBI:78785"/>
        <dbReference type="EC" id="1.3.1.9"/>
    </reaction>
</comment>
<comment type="pathway">
    <text evidence="1">Lipid metabolism; fatty acid biosynthesis.</text>
</comment>
<comment type="subunit">
    <text evidence="1">Monomer.</text>
</comment>
<comment type="similarity">
    <text evidence="1">Belongs to the TER reductase family.</text>
</comment>
<evidence type="ECO:0000255" key="1">
    <source>
        <dbReference type="HAMAP-Rule" id="MF_01838"/>
    </source>
</evidence>
<keyword id="KW-0275">Fatty acid biosynthesis</keyword>
<keyword id="KW-0276">Fatty acid metabolism</keyword>
<keyword id="KW-0444">Lipid biosynthesis</keyword>
<keyword id="KW-0443">Lipid metabolism</keyword>
<keyword id="KW-0520">NAD</keyword>
<keyword id="KW-0560">Oxidoreductase</keyword>
<keyword id="KW-1185">Reference proteome</keyword>
<reference key="1">
    <citation type="journal article" date="2011" name="J. Bacteriol.">
        <title>Genome sequence of the verrucomicrobium Opitutus terrae PB90-1, an abundant inhabitant of rice paddy soil ecosystems.</title>
        <authorList>
            <person name="van Passel M.W."/>
            <person name="Kant R."/>
            <person name="Palva A."/>
            <person name="Copeland A."/>
            <person name="Lucas S."/>
            <person name="Lapidus A."/>
            <person name="Glavina del Rio T."/>
            <person name="Pitluck S."/>
            <person name="Goltsman E."/>
            <person name="Clum A."/>
            <person name="Sun H."/>
            <person name="Schmutz J."/>
            <person name="Larimer F.W."/>
            <person name="Land M.L."/>
            <person name="Hauser L."/>
            <person name="Kyrpides N."/>
            <person name="Mikhailova N."/>
            <person name="Richardson P.P."/>
            <person name="Janssen P.H."/>
            <person name="de Vos W.M."/>
            <person name="Smidt H."/>
        </authorList>
    </citation>
    <scope>NUCLEOTIDE SEQUENCE [LARGE SCALE GENOMIC DNA]</scope>
    <source>
        <strain>DSM 11246 / JCM 15787 / PB90-1</strain>
    </source>
</reference>
<dbReference type="EC" id="1.3.1.9" evidence="1"/>
<dbReference type="EMBL" id="CP001032">
    <property type="protein sequence ID" value="ACB77165.1"/>
    <property type="molecule type" value="Genomic_DNA"/>
</dbReference>
<dbReference type="RefSeq" id="WP_012376694.1">
    <property type="nucleotide sequence ID" value="NC_010571.1"/>
</dbReference>
<dbReference type="SMR" id="B1ZZ93"/>
<dbReference type="STRING" id="452637.Oter_3891"/>
<dbReference type="KEGG" id="ote:Oter_3891"/>
<dbReference type="eggNOG" id="COG3007">
    <property type="taxonomic scope" value="Bacteria"/>
</dbReference>
<dbReference type="HOGENOM" id="CLU_057698_1_0_0"/>
<dbReference type="OrthoDB" id="9802260at2"/>
<dbReference type="UniPathway" id="UPA00094"/>
<dbReference type="Proteomes" id="UP000007013">
    <property type="component" value="Chromosome"/>
</dbReference>
<dbReference type="GO" id="GO:0004318">
    <property type="term" value="F:enoyl-[acyl-carrier-protein] reductase (NADH) activity"/>
    <property type="evidence" value="ECO:0007669"/>
    <property type="project" value="UniProtKB-UniRule"/>
</dbReference>
<dbReference type="GO" id="GO:0051287">
    <property type="term" value="F:NAD binding"/>
    <property type="evidence" value="ECO:0007669"/>
    <property type="project" value="UniProtKB-UniRule"/>
</dbReference>
<dbReference type="GO" id="GO:0050343">
    <property type="term" value="F:trans-2-enoyl-CoA reductase (NADH) activity"/>
    <property type="evidence" value="ECO:0007669"/>
    <property type="project" value="TreeGrafter"/>
</dbReference>
<dbReference type="GO" id="GO:0006633">
    <property type="term" value="P:fatty acid biosynthetic process"/>
    <property type="evidence" value="ECO:0007669"/>
    <property type="project" value="UniProtKB-UniRule"/>
</dbReference>
<dbReference type="FunFam" id="3.40.50.720:FF:000221">
    <property type="entry name" value="Enoyl-[acyl-carrier-protein] reductase [NADH]"/>
    <property type="match status" value="1"/>
</dbReference>
<dbReference type="Gene3D" id="3.40.50.720">
    <property type="entry name" value="NAD(P)-binding Rossmann-like Domain"/>
    <property type="match status" value="1"/>
</dbReference>
<dbReference type="HAMAP" id="MF_01838">
    <property type="entry name" value="FabV_reductase"/>
    <property type="match status" value="1"/>
</dbReference>
<dbReference type="InterPro" id="IPR024906">
    <property type="entry name" value="Eno_Rdtase_FAD-bd_dom"/>
</dbReference>
<dbReference type="InterPro" id="IPR024910">
    <property type="entry name" value="Enoyl-CoA_Rdtase_cat_dom"/>
</dbReference>
<dbReference type="InterPro" id="IPR050048">
    <property type="entry name" value="FabV-like_NADH_b"/>
</dbReference>
<dbReference type="InterPro" id="IPR010758">
    <property type="entry name" value="Trans-2-enoyl-CoA_reductase"/>
</dbReference>
<dbReference type="NCBIfam" id="NF043048">
    <property type="entry name" value="EnoyACPredFabV"/>
    <property type="match status" value="1"/>
</dbReference>
<dbReference type="NCBIfam" id="NF010177">
    <property type="entry name" value="PRK13656.1"/>
    <property type="match status" value="1"/>
</dbReference>
<dbReference type="PANTHER" id="PTHR37480">
    <property type="entry name" value="ENOYL-[ACYL-CARRIER-PROTEIN] REDUCTASE [NADH]"/>
    <property type="match status" value="1"/>
</dbReference>
<dbReference type="PANTHER" id="PTHR37480:SF1">
    <property type="entry name" value="ENOYL-[ACYL-CARRIER-PROTEIN] REDUCTASE [NADH]"/>
    <property type="match status" value="1"/>
</dbReference>
<dbReference type="Pfam" id="PF07055">
    <property type="entry name" value="Eno-Rase_FAD_bd"/>
    <property type="match status" value="1"/>
</dbReference>
<dbReference type="Pfam" id="PF12242">
    <property type="entry name" value="Eno-Rase_NADH_b"/>
    <property type="match status" value="1"/>
</dbReference>
<dbReference type="Pfam" id="PF12241">
    <property type="entry name" value="Enoyl_reductase"/>
    <property type="match status" value="1"/>
</dbReference>
<organism>
    <name type="scientific">Opitutus terrae (strain DSM 11246 / JCM 15787 / PB90-1)</name>
    <dbReference type="NCBI Taxonomy" id="452637"/>
    <lineage>
        <taxon>Bacteria</taxon>
        <taxon>Pseudomonadati</taxon>
        <taxon>Verrucomicrobiota</taxon>
        <taxon>Opitutia</taxon>
        <taxon>Opitutales</taxon>
        <taxon>Opitutaceae</taxon>
        <taxon>Opitutus</taxon>
    </lineage>
</organism>
<sequence>MIIQPRVRGFVCVTSHPVGCAAHVQEWIDYVKSKGVIAHGPKKVLVIGASTGYGLASRVTAAFGSGAATIGVFYERPSEEGRLATPGWYNSIGFTRAARAAGLYARNFNGDAFSDDIKKQVLDAIKADLGQVDLVIYSLASPRRTHPRTGTVHKSVLKPVGAPYTNKTVDTDTGIVSEITIEPATETEIADTIAVMGGEDWELWMHALRDANLLAPNAQTVAYSYIGPEVTWPVYKNGTIGLAKNDLERAAQALDALLKPTGGRAFIAVNKALVTQASSAIPVVPLYISILYKIMKARGTHERCIEQMQRLFATHMYNGQTPRFDETGRVRIDDLEMAPEVQAAVREIWPTVTTANLVERTDIAGYRSEFLRLFGFGMPGVDYQADVDPHIPMI</sequence>
<protein>
    <recommendedName>
        <fullName evidence="1">Enoyl-[acyl-carrier-protein] reductase [NADH]</fullName>
        <shortName evidence="1">ENR</shortName>
        <ecNumber evidence="1">1.3.1.9</ecNumber>
    </recommendedName>
</protein>
<gene>
    <name evidence="1" type="primary">fabV</name>
    <name type="ordered locus">Oter_3891</name>
</gene>
<feature type="chain" id="PRO_1000188365" description="Enoyl-[acyl-carrier-protein] reductase [NADH]">
    <location>
        <begin position="1"/>
        <end position="394"/>
    </location>
</feature>
<feature type="active site" description="Proton donor" evidence="1">
    <location>
        <position position="235"/>
    </location>
</feature>
<feature type="binding site" evidence="1">
    <location>
        <begin position="48"/>
        <end position="53"/>
    </location>
    <ligand>
        <name>NAD(+)</name>
        <dbReference type="ChEBI" id="CHEBI:57540"/>
    </ligand>
</feature>
<feature type="binding site" evidence="1">
    <location>
        <begin position="74"/>
        <end position="75"/>
    </location>
    <ligand>
        <name>NAD(+)</name>
        <dbReference type="ChEBI" id="CHEBI:57540"/>
    </ligand>
</feature>
<feature type="binding site" evidence="1">
    <location>
        <begin position="111"/>
        <end position="112"/>
    </location>
    <ligand>
        <name>NAD(+)</name>
        <dbReference type="ChEBI" id="CHEBI:57540"/>
    </ligand>
</feature>
<feature type="binding site" evidence="1">
    <location>
        <begin position="139"/>
        <end position="140"/>
    </location>
    <ligand>
        <name>NAD(+)</name>
        <dbReference type="ChEBI" id="CHEBI:57540"/>
    </ligand>
</feature>
<feature type="binding site" evidence="1">
    <location>
        <position position="225"/>
    </location>
    <ligand>
        <name>substrate</name>
    </ligand>
</feature>
<feature type="binding site" evidence="1">
    <location>
        <position position="244"/>
    </location>
    <ligand>
        <name>NAD(+)</name>
        <dbReference type="ChEBI" id="CHEBI:57540"/>
    </ligand>
</feature>
<feature type="binding site" evidence="1">
    <location>
        <begin position="273"/>
        <end position="275"/>
    </location>
    <ligand>
        <name>NAD(+)</name>
        <dbReference type="ChEBI" id="CHEBI:57540"/>
    </ligand>
</feature>
<feature type="site" description="Plays an important role in discriminating NADH against NADPH" evidence="1">
    <location>
        <position position="75"/>
    </location>
</feature>